<dbReference type="EMBL" id="M82918">
    <property type="protein sequence ID" value="AAA47828.1"/>
    <property type="molecule type" value="Genomic_DNA"/>
</dbReference>
<dbReference type="EMBL" id="S64567">
    <property type="protein sequence ID" value="AAP13954.1"/>
    <property type="molecule type" value="Genomic_DNA"/>
</dbReference>
<dbReference type="RefSeq" id="NP_620490.1">
    <property type="nucleotide sequence ID" value="NC_003744.1"/>
</dbReference>
<dbReference type="SMR" id="Q89448"/>
<dbReference type="KEGG" id="vg:940474"/>
<dbReference type="Proteomes" id="UP000007230">
    <property type="component" value="Genome"/>
</dbReference>
<dbReference type="Proteomes" id="UP000204673">
    <property type="component" value="Genome"/>
</dbReference>
<dbReference type="GO" id="GO:0033644">
    <property type="term" value="C:host cell membrane"/>
    <property type="evidence" value="ECO:0007669"/>
    <property type="project" value="UniProtKB-SubCell"/>
</dbReference>
<dbReference type="GO" id="GO:0016020">
    <property type="term" value="C:membrane"/>
    <property type="evidence" value="ECO:0007669"/>
    <property type="project" value="UniProtKB-KW"/>
</dbReference>
<dbReference type="GO" id="GO:0046740">
    <property type="term" value="P:transport of virus in host, cell to cell"/>
    <property type="evidence" value="ECO:0007669"/>
    <property type="project" value="UniProtKB-KW"/>
</dbReference>
<dbReference type="InterPro" id="IPR002621">
    <property type="entry name" value="Gemini_mov"/>
</dbReference>
<dbReference type="Pfam" id="PF01708">
    <property type="entry name" value="Gemini_mov"/>
    <property type="match status" value="1"/>
</dbReference>
<keyword id="KW-1043">Host membrane</keyword>
<keyword id="KW-0472">Membrane</keyword>
<keyword id="KW-1185">Reference proteome</keyword>
<keyword id="KW-0812">Transmembrane</keyword>
<keyword id="KW-1133">Transmembrane helix</keyword>
<keyword id="KW-0813">Transport</keyword>
<keyword id="KW-0916">Viral movement protein</keyword>
<accession>Q89448</accession>
<feature type="chain" id="PRO_0000316931" description="Movement protein">
    <location>
        <begin position="1"/>
        <end position="109"/>
    </location>
</feature>
<feature type="transmembrane region" description="Helical" evidence="2">
    <location>
        <begin position="34"/>
        <end position="54"/>
    </location>
</feature>
<feature type="region of interest" description="Disordered" evidence="3">
    <location>
        <begin position="1"/>
        <end position="28"/>
    </location>
</feature>
<proteinExistence type="inferred from homology"/>
<comment type="function">
    <text>Involved in the viral transport within, and between cells.</text>
</comment>
<comment type="subunit">
    <text evidence="1">Interacts with the capsid protein (CP). Part of a MP-CP-viral DNA complex (By similarity).</text>
</comment>
<comment type="subcellular location">
    <subcellularLocation>
        <location evidence="4">Host membrane</location>
        <topology evidence="4">Single-pass membrane protein</topology>
    </subcellularLocation>
</comment>
<comment type="similarity">
    <text evidence="4">Belongs to the mastrevirus movement protein family.</text>
</comment>
<gene>
    <name type="ORF">V2</name>
</gene>
<reference key="1">
    <citation type="thesis" date="1991" institute="University of Cape Town" country="South Africa">
        <title>Molecular investigations of subgroup 1 geminiviruses.</title>
        <authorList>
            <person name="Hughes F.L."/>
        </authorList>
    </citation>
    <scope>NUCLEOTIDE SEQUENCE [GENOMIC DNA]</scope>
</reference>
<reference key="2">
    <citation type="journal article" date="1993" name="Arch. Virol.">
        <title>Complete nucleotide sequence of sugarcane streak Monogeminivirus.</title>
        <authorList>
            <person name="Hughes F.L."/>
            <person name="Rybicki E.P."/>
            <person name="Kirby R."/>
        </authorList>
    </citation>
    <scope>NUCLEOTIDE SEQUENCE [GENOMIC DNA]</scope>
</reference>
<protein>
    <recommendedName>
        <fullName>Movement protein</fullName>
        <shortName>MP</shortName>
    </recommendedName>
</protein>
<organism>
    <name type="scientific">Sugarcane streak virus (isolate South Africa)</name>
    <name type="common">SSV</name>
    <name type="synonym">Sugarcane streak virus (isolate Natal)</name>
    <dbReference type="NCBI Taxonomy" id="268781"/>
    <lineage>
        <taxon>Viruses</taxon>
        <taxon>Monodnaviria</taxon>
        <taxon>Shotokuvirae</taxon>
        <taxon>Cressdnaviricota</taxon>
        <taxon>Repensiviricetes</taxon>
        <taxon>Geplafuvirales</taxon>
        <taxon>Geminiviridae</taxon>
        <taxon>Mastrevirus</taxon>
        <taxon>Sugarcane streak virus</taxon>
    </lineage>
</organism>
<name>MP_SSVN</name>
<organismHost>
    <name type="scientific">Cenchrus echinatus</name>
    <dbReference type="NCBI Taxonomy" id="173841"/>
</organismHost>
<organismHost>
    <name type="scientific">Saccharum officinarum</name>
    <name type="common">Sugarcane</name>
    <dbReference type="NCBI Taxonomy" id="4547"/>
</organismHost>
<sequence length="109" mass="11722">MDSFGRAPPLWPQSALPRVPGAAPSSSGLPWSRVGEIAIFTFVAVLALYLLWSWVGRDLLLVLKARRGGTTEELTFGPRERHSLPAVAVARVENPPCPSGSVEARPFTG</sequence>
<evidence type="ECO:0000250" key="1"/>
<evidence type="ECO:0000255" key="2"/>
<evidence type="ECO:0000256" key="3">
    <source>
        <dbReference type="SAM" id="MobiDB-lite"/>
    </source>
</evidence>
<evidence type="ECO:0000305" key="4"/>